<gene>
    <name evidence="2" type="primary">rpmA</name>
    <name type="ordered locus">CLH_0564</name>
</gene>
<protein>
    <recommendedName>
        <fullName evidence="2">Large ribosomal subunit protein bL27</fullName>
    </recommendedName>
    <alternativeName>
        <fullName evidence="3">50S ribosomal protein L27</fullName>
    </alternativeName>
</protein>
<name>RL27_CLOBA</name>
<sequence>MLIMNLQLFAHKKGVGSSKNGRDSESKRLGVKSTDGEFVLAGNIIVRQRGTKIHPGNNVGRGKDDTLFAKIDGVVKFERVGKDKKKASVYPVDVEAIAE</sequence>
<keyword id="KW-0687">Ribonucleoprotein</keyword>
<keyword id="KW-0689">Ribosomal protein</keyword>
<feature type="propeptide" id="PRO_0000459872" evidence="1">
    <location>
        <begin position="1"/>
        <end position="9"/>
    </location>
</feature>
<feature type="chain" id="PRO_1000128719" description="Large ribosomal subunit protein bL27">
    <location>
        <begin position="10"/>
        <end position="99"/>
    </location>
</feature>
<reference key="1">
    <citation type="submission" date="2008-05" db="EMBL/GenBank/DDBJ databases">
        <title>Complete genome sequence of Clostridium botulinum E3 str. Alaska E43.</title>
        <authorList>
            <person name="Brinkac L.M."/>
            <person name="Brown J.L."/>
            <person name="Bruce D."/>
            <person name="Detter C."/>
            <person name="Munk C."/>
            <person name="Smith L.A."/>
            <person name="Smith T.J."/>
            <person name="Sutton G."/>
            <person name="Brettin T.S."/>
        </authorList>
    </citation>
    <scope>NUCLEOTIDE SEQUENCE [LARGE SCALE GENOMIC DNA]</scope>
    <source>
        <strain>Alaska E43 / Type E3</strain>
    </source>
</reference>
<evidence type="ECO:0000250" key="1">
    <source>
        <dbReference type="UniProtKB" id="Q2FXT0"/>
    </source>
</evidence>
<evidence type="ECO:0000255" key="2">
    <source>
        <dbReference type="HAMAP-Rule" id="MF_00539"/>
    </source>
</evidence>
<evidence type="ECO:0000305" key="3"/>
<accession>B2V0A7</accession>
<comment type="PTM">
    <text evidence="1">The N-terminus is cleaved by ribosomal processing cysteine protease Prp.</text>
</comment>
<comment type="similarity">
    <text evidence="2">Belongs to the bacterial ribosomal protein bL27 family.</text>
</comment>
<proteinExistence type="inferred from homology"/>
<dbReference type="EMBL" id="CP001078">
    <property type="protein sequence ID" value="ACD53075.1"/>
    <property type="molecule type" value="Genomic_DNA"/>
</dbReference>
<dbReference type="RefSeq" id="WP_003372402.1">
    <property type="nucleotide sequence ID" value="NC_010723.1"/>
</dbReference>
<dbReference type="SMR" id="B2V0A7"/>
<dbReference type="KEGG" id="cbt:CLH_0564"/>
<dbReference type="HOGENOM" id="CLU_095424_4_0_9"/>
<dbReference type="GO" id="GO:0022625">
    <property type="term" value="C:cytosolic large ribosomal subunit"/>
    <property type="evidence" value="ECO:0007669"/>
    <property type="project" value="TreeGrafter"/>
</dbReference>
<dbReference type="GO" id="GO:0003735">
    <property type="term" value="F:structural constituent of ribosome"/>
    <property type="evidence" value="ECO:0007669"/>
    <property type="project" value="InterPro"/>
</dbReference>
<dbReference type="GO" id="GO:0006412">
    <property type="term" value="P:translation"/>
    <property type="evidence" value="ECO:0007669"/>
    <property type="project" value="UniProtKB-UniRule"/>
</dbReference>
<dbReference type="FunFam" id="2.40.50.100:FF:000004">
    <property type="entry name" value="50S ribosomal protein L27"/>
    <property type="match status" value="1"/>
</dbReference>
<dbReference type="Gene3D" id="2.40.50.100">
    <property type="match status" value="1"/>
</dbReference>
<dbReference type="HAMAP" id="MF_00539">
    <property type="entry name" value="Ribosomal_bL27"/>
    <property type="match status" value="1"/>
</dbReference>
<dbReference type="InterPro" id="IPR001684">
    <property type="entry name" value="Ribosomal_bL27"/>
</dbReference>
<dbReference type="InterPro" id="IPR018261">
    <property type="entry name" value="Ribosomal_bL27_CS"/>
</dbReference>
<dbReference type="NCBIfam" id="TIGR00062">
    <property type="entry name" value="L27"/>
    <property type="match status" value="1"/>
</dbReference>
<dbReference type="PANTHER" id="PTHR15893:SF0">
    <property type="entry name" value="LARGE RIBOSOMAL SUBUNIT PROTEIN BL27M"/>
    <property type="match status" value="1"/>
</dbReference>
<dbReference type="PANTHER" id="PTHR15893">
    <property type="entry name" value="RIBOSOMAL PROTEIN L27"/>
    <property type="match status" value="1"/>
</dbReference>
<dbReference type="Pfam" id="PF01016">
    <property type="entry name" value="Ribosomal_L27"/>
    <property type="match status" value="1"/>
</dbReference>
<dbReference type="PRINTS" id="PR00063">
    <property type="entry name" value="RIBOSOMALL27"/>
</dbReference>
<dbReference type="SUPFAM" id="SSF110324">
    <property type="entry name" value="Ribosomal L27 protein-like"/>
    <property type="match status" value="1"/>
</dbReference>
<dbReference type="PROSITE" id="PS00831">
    <property type="entry name" value="RIBOSOMAL_L27"/>
    <property type="match status" value="1"/>
</dbReference>
<organism>
    <name type="scientific">Clostridium botulinum (strain Alaska E43 / Type E3)</name>
    <dbReference type="NCBI Taxonomy" id="508767"/>
    <lineage>
        <taxon>Bacteria</taxon>
        <taxon>Bacillati</taxon>
        <taxon>Bacillota</taxon>
        <taxon>Clostridia</taxon>
        <taxon>Eubacteriales</taxon>
        <taxon>Clostridiaceae</taxon>
        <taxon>Clostridium</taxon>
    </lineage>
</organism>